<accession>Q2T3K6</accession>
<sequence>MPERDPILLTPGPLTTSRMTRDAMLHDWGSWDAAFNRLTKSVCADLVRIAGGGDAYVCVPLQGSGTFAVEAALGTLVPRDGRVLVPNNGAYCARIAKILRRLGIAHSELPFAEDEPASAQAIDAALARDARITHVALVHLETSAGLLNPLDDIAAVCRARGKALIVDAMSSFGALPIALAGSGIDALISASGKCLEGVPGMGFVIARRAPLEAAEGRSPSVVLDLHDQYAYMQRTSQWRFTPPTHVLAALRAALDQFFDEGGQPARGARYAENCAALVDGMRALGFEPFLDARAQASVIVTFHAPADPAYAFAAFYAAVRDAGYVLYPGKLTTADTFRVGCIGALGAHEMRGAVAAIGGALRALGIAMR</sequence>
<gene>
    <name evidence="1" type="primary">phnW</name>
    <name type="ordered locus">BTH_II2055</name>
</gene>
<protein>
    <recommendedName>
        <fullName evidence="1">2-aminoethylphosphonate--pyruvate transaminase</fullName>
        <ecNumber evidence="1">2.6.1.37</ecNumber>
    </recommendedName>
    <alternativeName>
        <fullName evidence="1">2-aminoethylphosphonate aminotransferase</fullName>
    </alternativeName>
    <alternativeName>
        <fullName evidence="1">AEP transaminase</fullName>
        <shortName evidence="1">AEPT</shortName>
    </alternativeName>
</protein>
<organism>
    <name type="scientific">Burkholderia thailandensis (strain ATCC 700388 / DSM 13276 / CCUG 48851 / CIP 106301 / E264)</name>
    <dbReference type="NCBI Taxonomy" id="271848"/>
    <lineage>
        <taxon>Bacteria</taxon>
        <taxon>Pseudomonadati</taxon>
        <taxon>Pseudomonadota</taxon>
        <taxon>Betaproteobacteria</taxon>
        <taxon>Burkholderiales</taxon>
        <taxon>Burkholderiaceae</taxon>
        <taxon>Burkholderia</taxon>
        <taxon>pseudomallei group</taxon>
    </lineage>
</organism>
<dbReference type="EC" id="2.6.1.37" evidence="1"/>
<dbReference type="EMBL" id="CP000085">
    <property type="protein sequence ID" value="ABC35345.1"/>
    <property type="molecule type" value="Genomic_DNA"/>
</dbReference>
<dbReference type="RefSeq" id="WP_011401489.1">
    <property type="nucleotide sequence ID" value="NZ_CP008785.1"/>
</dbReference>
<dbReference type="SMR" id="Q2T3K6"/>
<dbReference type="GeneID" id="45119471"/>
<dbReference type="KEGG" id="bte:BTH_II2055"/>
<dbReference type="HOGENOM" id="CLU_027686_3_1_4"/>
<dbReference type="Proteomes" id="UP000001930">
    <property type="component" value="Chromosome II"/>
</dbReference>
<dbReference type="GO" id="GO:0047304">
    <property type="term" value="F:2-aminoethylphosphonate-pyruvate transaminase activity"/>
    <property type="evidence" value="ECO:0007669"/>
    <property type="project" value="UniProtKB-UniRule"/>
</dbReference>
<dbReference type="GO" id="GO:0019700">
    <property type="term" value="P:organic phosphonate catabolic process"/>
    <property type="evidence" value="ECO:0007669"/>
    <property type="project" value="InterPro"/>
</dbReference>
<dbReference type="Gene3D" id="3.90.1150.10">
    <property type="entry name" value="Aspartate Aminotransferase, domain 1"/>
    <property type="match status" value="1"/>
</dbReference>
<dbReference type="Gene3D" id="3.40.640.10">
    <property type="entry name" value="Type I PLP-dependent aspartate aminotransferase-like (Major domain)"/>
    <property type="match status" value="1"/>
</dbReference>
<dbReference type="HAMAP" id="MF_01376">
    <property type="entry name" value="PhnW_aminotrans_5"/>
    <property type="match status" value="1"/>
</dbReference>
<dbReference type="InterPro" id="IPR000192">
    <property type="entry name" value="Aminotrans_V_dom"/>
</dbReference>
<dbReference type="InterPro" id="IPR012703">
    <property type="entry name" value="NH2EtPonate_pyrv_transaminase"/>
</dbReference>
<dbReference type="InterPro" id="IPR015424">
    <property type="entry name" value="PyrdxlP-dep_Trfase"/>
</dbReference>
<dbReference type="InterPro" id="IPR015421">
    <property type="entry name" value="PyrdxlP-dep_Trfase_major"/>
</dbReference>
<dbReference type="InterPro" id="IPR015422">
    <property type="entry name" value="PyrdxlP-dep_Trfase_small"/>
</dbReference>
<dbReference type="InterPro" id="IPR024169">
    <property type="entry name" value="SP_NH2Trfase/AEP_transaminase"/>
</dbReference>
<dbReference type="NCBIfam" id="TIGR03301">
    <property type="entry name" value="PhnW-AepZ"/>
    <property type="match status" value="1"/>
</dbReference>
<dbReference type="NCBIfam" id="NF010006">
    <property type="entry name" value="PRK13479.1"/>
    <property type="match status" value="1"/>
</dbReference>
<dbReference type="NCBIfam" id="TIGR02326">
    <property type="entry name" value="transamin_PhnW"/>
    <property type="match status" value="1"/>
</dbReference>
<dbReference type="PANTHER" id="PTHR42778">
    <property type="entry name" value="2-AMINOETHYLPHOSPHONATE--PYRUVATE TRANSAMINASE"/>
    <property type="match status" value="1"/>
</dbReference>
<dbReference type="PANTHER" id="PTHR42778:SF1">
    <property type="entry name" value="2-AMINOETHYLPHOSPHONATE--PYRUVATE TRANSAMINASE"/>
    <property type="match status" value="1"/>
</dbReference>
<dbReference type="Pfam" id="PF00266">
    <property type="entry name" value="Aminotran_5"/>
    <property type="match status" value="1"/>
</dbReference>
<dbReference type="PIRSF" id="PIRSF000524">
    <property type="entry name" value="SPT"/>
    <property type="match status" value="1"/>
</dbReference>
<dbReference type="SUPFAM" id="SSF53383">
    <property type="entry name" value="PLP-dependent transferases"/>
    <property type="match status" value="1"/>
</dbReference>
<keyword id="KW-0032">Aminotransferase</keyword>
<keyword id="KW-0663">Pyridoxal phosphate</keyword>
<keyword id="KW-0670">Pyruvate</keyword>
<keyword id="KW-0808">Transferase</keyword>
<reference key="1">
    <citation type="journal article" date="2005" name="BMC Genomics">
        <title>Bacterial genome adaptation to niches: divergence of the potential virulence genes in three Burkholderia species of different survival strategies.</title>
        <authorList>
            <person name="Kim H.S."/>
            <person name="Schell M.A."/>
            <person name="Yu Y."/>
            <person name="Ulrich R.L."/>
            <person name="Sarria S.H."/>
            <person name="Nierman W.C."/>
            <person name="DeShazer D."/>
        </authorList>
    </citation>
    <scope>NUCLEOTIDE SEQUENCE [LARGE SCALE GENOMIC DNA]</scope>
    <source>
        <strain>ATCC 700388 / DSM 13276 / CCUG 48851 / CIP 106301 / E264</strain>
    </source>
</reference>
<proteinExistence type="inferred from homology"/>
<comment type="function">
    <text evidence="1">Involved in phosphonate degradation.</text>
</comment>
<comment type="catalytic activity">
    <reaction evidence="1">
        <text>(2-aminoethyl)phosphonate + pyruvate = phosphonoacetaldehyde + L-alanine</text>
        <dbReference type="Rhea" id="RHEA:17021"/>
        <dbReference type="ChEBI" id="CHEBI:15361"/>
        <dbReference type="ChEBI" id="CHEBI:57418"/>
        <dbReference type="ChEBI" id="CHEBI:57972"/>
        <dbReference type="ChEBI" id="CHEBI:58383"/>
        <dbReference type="EC" id="2.6.1.37"/>
    </reaction>
</comment>
<comment type="cofactor">
    <cofactor evidence="1">
        <name>pyridoxal 5'-phosphate</name>
        <dbReference type="ChEBI" id="CHEBI:597326"/>
    </cofactor>
</comment>
<comment type="subunit">
    <text evidence="1">Homodimer.</text>
</comment>
<comment type="similarity">
    <text evidence="1">Belongs to the class-V pyridoxal-phosphate-dependent aminotransferase family. PhnW subfamily.</text>
</comment>
<comment type="caution">
    <text evidence="2">The second enzyme involved in phosphonate degradation (PhnX, EC 3.11.1.1) is not found in this organism. The function of this enzyme is therefore uncertain.</text>
</comment>
<evidence type="ECO:0000255" key="1">
    <source>
        <dbReference type="HAMAP-Rule" id="MF_01376"/>
    </source>
</evidence>
<evidence type="ECO:0000305" key="2"/>
<name>PHNW_BURTA</name>
<feature type="chain" id="PRO_0000286767" description="2-aminoethylphosphonate--pyruvate transaminase">
    <location>
        <begin position="1"/>
        <end position="369"/>
    </location>
</feature>
<feature type="modified residue" description="N6-(pyridoxal phosphate)lysine" evidence="1">
    <location>
        <position position="193"/>
    </location>
</feature>